<reference key="1">
    <citation type="submission" date="2005-07" db="EMBL/GenBank/DDBJ databases">
        <title>Complete sequence of Synechococcus sp. CC9605.</title>
        <authorList>
            <consortium name="US DOE Joint Genome Institute"/>
            <person name="Copeland A."/>
            <person name="Lucas S."/>
            <person name="Lapidus A."/>
            <person name="Barry K."/>
            <person name="Detter J.C."/>
            <person name="Glavina T."/>
            <person name="Hammon N."/>
            <person name="Israni S."/>
            <person name="Pitluck S."/>
            <person name="Schmutz J."/>
            <person name="Martinez M."/>
            <person name="Larimer F."/>
            <person name="Land M."/>
            <person name="Kyrpides N."/>
            <person name="Ivanova N."/>
            <person name="Richardson P."/>
        </authorList>
    </citation>
    <scope>NUCLEOTIDE SEQUENCE [LARGE SCALE GENOMIC DNA]</scope>
    <source>
        <strain>CC9605</strain>
    </source>
</reference>
<comment type="function">
    <text evidence="1">PsaA and PsaB bind P700, the primary electron donor of photosystem I (PSI), as well as the electron acceptors A0, A1 and FX. PSI is a plastocyanin/cytochrome c6-ferredoxin oxidoreductase, converting photonic excitation into a charge separation, which transfers an electron from the donor P700 chlorophyll pair to the spectroscopically characterized acceptors A0, A1, FX, FA and FB in turn. Oxidized P700 is reduced on the lumenal side of the thylakoid membrane by plastocyanin or cytochrome c6.</text>
</comment>
<comment type="catalytic activity">
    <reaction evidence="1">
        <text>reduced [plastocyanin] + hnu + oxidized [2Fe-2S]-[ferredoxin] = oxidized [plastocyanin] + reduced [2Fe-2S]-[ferredoxin]</text>
        <dbReference type="Rhea" id="RHEA:30407"/>
        <dbReference type="Rhea" id="RHEA-COMP:10000"/>
        <dbReference type="Rhea" id="RHEA-COMP:10001"/>
        <dbReference type="Rhea" id="RHEA-COMP:10039"/>
        <dbReference type="Rhea" id="RHEA-COMP:10040"/>
        <dbReference type="ChEBI" id="CHEBI:29036"/>
        <dbReference type="ChEBI" id="CHEBI:30212"/>
        <dbReference type="ChEBI" id="CHEBI:33737"/>
        <dbReference type="ChEBI" id="CHEBI:33738"/>
        <dbReference type="ChEBI" id="CHEBI:49552"/>
        <dbReference type="EC" id="1.97.1.12"/>
    </reaction>
</comment>
<comment type="cofactor">
    <text evidence="1">PSI electron transfer chain: 5 chlorophyll a, 1 chlorophyll a', 2 phylloquinones and 3 4Fe-4S clusters. PSI core antenna: 90 chlorophyll a, 22 carotenoids, 3 phospholipids and 1 galactolipid. P700 is a chlorophyll a/chlorophyll a' dimer, A0 is one or more chlorophyll a, A1 is one or both phylloquinones and FX is a shared 4Fe-4S iron-sulfur center.</text>
</comment>
<comment type="subunit">
    <text evidence="1">The PsaA/B heterodimer binds the P700 chlorophyll special pair and subsequent electron acceptors. PSI consists of a core antenna complex that captures photons, and an electron transfer chain that converts photonic excitation into a charge separation. The cyanobacterial PSI reaction center is composed of one copy each of PsaA,B,C,D,E,F,I,J,K,L,M and X, and forms trimeric complexes.</text>
</comment>
<comment type="subcellular location">
    <subcellularLocation>
        <location evidence="1">Cellular thylakoid membrane</location>
        <topology evidence="1">Multi-pass membrane protein</topology>
    </subcellularLocation>
</comment>
<comment type="similarity">
    <text evidence="1">Belongs to the PsaA/PsaB family.</text>
</comment>
<organism>
    <name type="scientific">Synechococcus sp. (strain CC9605)</name>
    <dbReference type="NCBI Taxonomy" id="110662"/>
    <lineage>
        <taxon>Bacteria</taxon>
        <taxon>Bacillati</taxon>
        <taxon>Cyanobacteriota</taxon>
        <taxon>Cyanophyceae</taxon>
        <taxon>Synechococcales</taxon>
        <taxon>Synechococcaceae</taxon>
        <taxon>Synechococcus</taxon>
    </lineage>
</organism>
<sequence>MATKFPSFSQGLAQDPTTRRIWYGIATAHDFESHDGMTEERLYQKLFSTHFGHLAIIGLWVSGNLFHIAWQGNFEQWVADPLHVRPIAHAIWDPHFGQGAIDAFTQAGASSPVNIAYSGLYHWFYTIGMKTNAELYQGSIFMMILSAWALFAGWLHLQPKFRPSLAWFKNAESRLNHHLAVLFGFSSIAWTGHLVHVAIPEARGQHVGWDNFLNVLPHPAGLGPFFTGNWGVYAENPDSLNQVFGSSEGAGTAILTFLGGFHPQTEALWLTDIAHHHLAIGCIFVIAGHMYRTNFGIGHSIKEILETHNPPKGTPGDLGAGHKGLYDTINNSLHFQLGLALASLGVVTSLVAQHMYSMPSYAFIAKDYTTQAALYTHHQYIAIALMCGAFAHGAIFFIRDYDPEANKDNVLARMLEHKEAIISHLSWVSLFLGFHTLGLYVHNDVVVAFGTPEKQILVEPVFAQFVQAASGKAMYGMDVLLSNASSSASLAAQNIPGEHYWLDAINGNTDVFLPIGPGDFLVHHAIALGLHTTTLILVKGALDARGSKLMPDKKDFGYSFPCDGPGRGGTCDISAWDAFYLAVFWALNTVGWLTFYWHWKHLAIWSGNVAQFNESSTYLMGWFRDYLWLNSSQLINGYNPFGSNNLAVWAWMFLFGHLVWATGFMFLISWRGYWQELIETIVWAHQRSPIANMMGYRDKPVALSIVQARVVGLAHFTVGYVLTYAAFLIASTSGKFG</sequence>
<proteinExistence type="inferred from homology"/>
<keyword id="KW-0004">4Fe-4S</keyword>
<keyword id="KW-0148">Chlorophyll</keyword>
<keyword id="KW-0157">Chromophore</keyword>
<keyword id="KW-0249">Electron transport</keyword>
<keyword id="KW-0408">Iron</keyword>
<keyword id="KW-0411">Iron-sulfur</keyword>
<keyword id="KW-0460">Magnesium</keyword>
<keyword id="KW-0472">Membrane</keyword>
<keyword id="KW-0479">Metal-binding</keyword>
<keyword id="KW-0560">Oxidoreductase</keyword>
<keyword id="KW-0602">Photosynthesis</keyword>
<keyword id="KW-0603">Photosystem I</keyword>
<keyword id="KW-0793">Thylakoid</keyword>
<keyword id="KW-0812">Transmembrane</keyword>
<keyword id="KW-1133">Transmembrane helix</keyword>
<keyword id="KW-0813">Transport</keyword>
<evidence type="ECO:0000255" key="1">
    <source>
        <dbReference type="HAMAP-Rule" id="MF_00482"/>
    </source>
</evidence>
<accession>Q3AMS4</accession>
<dbReference type="EC" id="1.97.1.12" evidence="1"/>
<dbReference type="EMBL" id="CP000110">
    <property type="protein sequence ID" value="ABB34108.1"/>
    <property type="molecule type" value="Genomic_DNA"/>
</dbReference>
<dbReference type="RefSeq" id="WP_011363356.1">
    <property type="nucleotide sequence ID" value="NC_007516.1"/>
</dbReference>
<dbReference type="SMR" id="Q3AMS4"/>
<dbReference type="STRING" id="110662.Syncc9605_0332"/>
<dbReference type="KEGG" id="syd:Syncc9605_0332"/>
<dbReference type="eggNOG" id="COG2885">
    <property type="taxonomic scope" value="Bacteria"/>
</dbReference>
<dbReference type="HOGENOM" id="CLU_016126_1_0_3"/>
<dbReference type="OrthoDB" id="499313at2"/>
<dbReference type="GO" id="GO:0009522">
    <property type="term" value="C:photosystem I"/>
    <property type="evidence" value="ECO:0007669"/>
    <property type="project" value="UniProtKB-KW"/>
</dbReference>
<dbReference type="GO" id="GO:0031676">
    <property type="term" value="C:plasma membrane-derived thylakoid membrane"/>
    <property type="evidence" value="ECO:0007669"/>
    <property type="project" value="UniProtKB-SubCell"/>
</dbReference>
<dbReference type="GO" id="GO:0051539">
    <property type="term" value="F:4 iron, 4 sulfur cluster binding"/>
    <property type="evidence" value="ECO:0007669"/>
    <property type="project" value="UniProtKB-KW"/>
</dbReference>
<dbReference type="GO" id="GO:0016168">
    <property type="term" value="F:chlorophyll binding"/>
    <property type="evidence" value="ECO:0007669"/>
    <property type="project" value="UniProtKB-KW"/>
</dbReference>
<dbReference type="GO" id="GO:0009055">
    <property type="term" value="F:electron transfer activity"/>
    <property type="evidence" value="ECO:0007669"/>
    <property type="project" value="UniProtKB-UniRule"/>
</dbReference>
<dbReference type="GO" id="GO:0000287">
    <property type="term" value="F:magnesium ion binding"/>
    <property type="evidence" value="ECO:0007669"/>
    <property type="project" value="UniProtKB-UniRule"/>
</dbReference>
<dbReference type="GO" id="GO:0016491">
    <property type="term" value="F:oxidoreductase activity"/>
    <property type="evidence" value="ECO:0007669"/>
    <property type="project" value="UniProtKB-KW"/>
</dbReference>
<dbReference type="GO" id="GO:0015979">
    <property type="term" value="P:photosynthesis"/>
    <property type="evidence" value="ECO:0007669"/>
    <property type="project" value="UniProtKB-UniRule"/>
</dbReference>
<dbReference type="FunFam" id="1.20.1130.10:FF:000001">
    <property type="entry name" value="Photosystem I P700 chlorophyll a apoprotein A2"/>
    <property type="match status" value="1"/>
</dbReference>
<dbReference type="Gene3D" id="1.20.1130.10">
    <property type="entry name" value="Photosystem I PsaA/PsaB"/>
    <property type="match status" value="1"/>
</dbReference>
<dbReference type="HAMAP" id="MF_00482">
    <property type="entry name" value="PSI_PsaB"/>
    <property type="match status" value="1"/>
</dbReference>
<dbReference type="InterPro" id="IPR001280">
    <property type="entry name" value="PSI_PsaA/B"/>
</dbReference>
<dbReference type="InterPro" id="IPR020586">
    <property type="entry name" value="PSI_PsaA/B_CS"/>
</dbReference>
<dbReference type="InterPro" id="IPR036408">
    <property type="entry name" value="PSI_PsaA/B_sf"/>
</dbReference>
<dbReference type="InterPro" id="IPR006244">
    <property type="entry name" value="PSI_PsaB"/>
</dbReference>
<dbReference type="NCBIfam" id="TIGR01336">
    <property type="entry name" value="psaB"/>
    <property type="match status" value="1"/>
</dbReference>
<dbReference type="PANTHER" id="PTHR30128">
    <property type="entry name" value="OUTER MEMBRANE PROTEIN, OMPA-RELATED"/>
    <property type="match status" value="1"/>
</dbReference>
<dbReference type="PANTHER" id="PTHR30128:SF19">
    <property type="entry name" value="PHOTOSYSTEM I P700 CHLOROPHYLL A APOPROTEIN A1-RELATED"/>
    <property type="match status" value="1"/>
</dbReference>
<dbReference type="Pfam" id="PF00223">
    <property type="entry name" value="PsaA_PsaB"/>
    <property type="match status" value="1"/>
</dbReference>
<dbReference type="PIRSF" id="PIRSF002905">
    <property type="entry name" value="PSI_A"/>
    <property type="match status" value="1"/>
</dbReference>
<dbReference type="PRINTS" id="PR00257">
    <property type="entry name" value="PHOTSYSPSAAB"/>
</dbReference>
<dbReference type="SUPFAM" id="SSF81558">
    <property type="entry name" value="Photosystem I subunits PsaA/PsaB"/>
    <property type="match status" value="1"/>
</dbReference>
<dbReference type="PROSITE" id="PS00419">
    <property type="entry name" value="PHOTOSYSTEM_I_PSAAB"/>
    <property type="match status" value="1"/>
</dbReference>
<protein>
    <recommendedName>
        <fullName evidence="1">Photosystem I P700 chlorophyll a apoprotein A2</fullName>
        <ecNumber evidence="1">1.97.1.12</ecNumber>
    </recommendedName>
    <alternativeName>
        <fullName evidence="1">PsaB</fullName>
    </alternativeName>
</protein>
<name>PSAB_SYNSC</name>
<feature type="chain" id="PRO_0000300024" description="Photosystem I P700 chlorophyll a apoprotein A2">
    <location>
        <begin position="1"/>
        <end position="737"/>
    </location>
</feature>
<feature type="transmembrane region" description="Helical; Name=I" evidence="1">
    <location>
        <begin position="46"/>
        <end position="69"/>
    </location>
</feature>
<feature type="transmembrane region" description="Helical; Name=II" evidence="1">
    <location>
        <begin position="135"/>
        <end position="158"/>
    </location>
</feature>
<feature type="transmembrane region" description="Helical; Name=III" evidence="1">
    <location>
        <begin position="175"/>
        <end position="199"/>
    </location>
</feature>
<feature type="transmembrane region" description="Helical; Name=IV" evidence="1">
    <location>
        <begin position="273"/>
        <end position="291"/>
    </location>
</feature>
<feature type="transmembrane region" description="Helical; Name=V" evidence="1">
    <location>
        <begin position="333"/>
        <end position="356"/>
    </location>
</feature>
<feature type="transmembrane region" description="Helical; Name=VI" evidence="1">
    <location>
        <begin position="372"/>
        <end position="398"/>
    </location>
</feature>
<feature type="transmembrane region" description="Helical; Name=VII" evidence="1">
    <location>
        <begin position="420"/>
        <end position="442"/>
    </location>
</feature>
<feature type="transmembrane region" description="Helical; Name=VIII" evidence="1">
    <location>
        <begin position="520"/>
        <end position="538"/>
    </location>
</feature>
<feature type="transmembrane region" description="Helical; Name=IX" evidence="1">
    <location>
        <begin position="578"/>
        <end position="599"/>
    </location>
</feature>
<feature type="transmembrane region" description="Helical; Name=X" evidence="1">
    <location>
        <begin position="646"/>
        <end position="668"/>
    </location>
</feature>
<feature type="transmembrane region" description="Helical; Name=XI" evidence="1">
    <location>
        <begin position="710"/>
        <end position="730"/>
    </location>
</feature>
<feature type="binding site" evidence="1">
    <location>
        <position position="562"/>
    </location>
    <ligand>
        <name>[4Fe-4S] cluster</name>
        <dbReference type="ChEBI" id="CHEBI:49883"/>
        <note>ligand shared between dimeric partners</note>
    </ligand>
</feature>
<feature type="binding site" evidence="1">
    <location>
        <position position="571"/>
    </location>
    <ligand>
        <name>[4Fe-4S] cluster</name>
        <dbReference type="ChEBI" id="CHEBI:49883"/>
        <note>ligand shared between dimeric partners</note>
    </ligand>
</feature>
<feature type="binding site" description="axial binding residue" evidence="1">
    <location>
        <position position="657"/>
    </location>
    <ligand>
        <name>chlorophyll a</name>
        <dbReference type="ChEBI" id="CHEBI:58416"/>
        <label>B1</label>
    </ligand>
    <ligandPart>
        <name>Mg</name>
        <dbReference type="ChEBI" id="CHEBI:25107"/>
    </ligandPart>
</feature>
<feature type="binding site" description="axial binding residue" evidence="1">
    <location>
        <position position="665"/>
    </location>
    <ligand>
        <name>chlorophyll a</name>
        <dbReference type="ChEBI" id="CHEBI:58416"/>
        <label>B3</label>
    </ligand>
    <ligandPart>
        <name>Mg</name>
        <dbReference type="ChEBI" id="CHEBI:25107"/>
    </ligandPart>
</feature>
<feature type="binding site" evidence="1">
    <location>
        <position position="673"/>
    </location>
    <ligand>
        <name>chlorophyll a</name>
        <dbReference type="ChEBI" id="CHEBI:58416"/>
        <label>B3</label>
    </ligand>
</feature>
<feature type="binding site" evidence="1">
    <location>
        <position position="674"/>
    </location>
    <ligand>
        <name>phylloquinone</name>
        <dbReference type="ChEBI" id="CHEBI:18067"/>
        <label>B</label>
    </ligand>
</feature>
<gene>
    <name evidence="1" type="primary">psaB</name>
    <name type="ordered locus">Syncc9605_0332</name>
</gene>